<reference key="1">
    <citation type="journal article" date="1997" name="Science">
        <title>The complete genome sequence of Escherichia coli K-12.</title>
        <authorList>
            <person name="Blattner F.R."/>
            <person name="Plunkett G. III"/>
            <person name="Bloch C.A."/>
            <person name="Perna N.T."/>
            <person name="Burland V."/>
            <person name="Riley M."/>
            <person name="Collado-Vides J."/>
            <person name="Glasner J.D."/>
            <person name="Rode C.K."/>
            <person name="Mayhew G.F."/>
            <person name="Gregor J."/>
            <person name="Davis N.W."/>
            <person name="Kirkpatrick H.A."/>
            <person name="Goeden M.A."/>
            <person name="Rose D.J."/>
            <person name="Mau B."/>
            <person name="Shao Y."/>
        </authorList>
    </citation>
    <scope>NUCLEOTIDE SEQUENCE [LARGE SCALE GENOMIC DNA]</scope>
    <source>
        <strain>K12 / MG1655 / ATCC 47076</strain>
    </source>
</reference>
<reference key="2">
    <citation type="journal article" date="2006" name="Mol. Syst. Biol.">
        <title>Highly accurate genome sequences of Escherichia coli K-12 strains MG1655 and W3110.</title>
        <authorList>
            <person name="Hayashi K."/>
            <person name="Morooka N."/>
            <person name="Yamamoto Y."/>
            <person name="Fujita K."/>
            <person name="Isono K."/>
            <person name="Choi S."/>
            <person name="Ohtsubo E."/>
            <person name="Baba T."/>
            <person name="Wanner B.L."/>
            <person name="Mori H."/>
            <person name="Horiuchi T."/>
        </authorList>
    </citation>
    <scope>NUCLEOTIDE SEQUENCE [LARGE SCALE GENOMIC DNA]</scope>
    <source>
        <strain>K12 / W3110 / ATCC 27325 / DSM 5911</strain>
    </source>
</reference>
<reference key="3">
    <citation type="journal article" date="2008" name="Mol. Microbiol.">
        <title>Repression of small toxic protein synthesis by the Sib and OhsC small RNAs.</title>
        <authorList>
            <person name="Fozo E.M."/>
            <person name="Kawano M."/>
            <person name="Fontaine F."/>
            <person name="Kaya Y."/>
            <person name="Mendieta K.S."/>
            <person name="Jones K.L."/>
            <person name="Ocampo A."/>
            <person name="Rudd K.E."/>
            <person name="Storz G."/>
        </authorList>
    </citation>
    <scope>IDENTIFICATION</scope>
    <scope>FUNCTION</scope>
    <scope>INDUCTION</scope>
    <scope>OVEREXPRESSION</scope>
    <scope>DISRUPTION PHENOTYPE</scope>
    <source>
        <strain>K12 / MG1655 / ATCC 47076</strain>
    </source>
</reference>
<dbReference type="EMBL" id="U00096">
    <property type="protein sequence ID" value="ACO60007.1"/>
    <property type="molecule type" value="Genomic_DNA"/>
</dbReference>
<dbReference type="EMBL" id="AP009048">
    <property type="status" value="NOT_ANNOTATED_CDS"/>
    <property type="molecule type" value="Genomic_DNA"/>
</dbReference>
<dbReference type="RefSeq" id="WP_010723220.1">
    <property type="nucleotide sequence ID" value="NZ_SSUV01000019.1"/>
</dbReference>
<dbReference type="RefSeq" id="YP_002791255.1">
    <property type="nucleotide sequence ID" value="NC_000913.3"/>
</dbReference>
<dbReference type="EnsemblBacteria" id="ACO60007">
    <property type="protein sequence ID" value="ACO60007"/>
    <property type="gene ID" value="b4665"/>
</dbReference>
<dbReference type="GeneID" id="7751627"/>
<dbReference type="KEGG" id="eco:b4665"/>
<dbReference type="InParanoid" id="C1P615"/>
<dbReference type="BioCyc" id="EcoCyc:MONOMER0-2857"/>
<dbReference type="PRO" id="PR:C1P615"/>
<dbReference type="Proteomes" id="UP000000625">
    <property type="component" value="Chromosome"/>
</dbReference>
<dbReference type="GO" id="GO:0012501">
    <property type="term" value="P:programmed cell death"/>
    <property type="evidence" value="ECO:0000315"/>
    <property type="project" value="EcoCyc"/>
</dbReference>
<dbReference type="InterPro" id="IPR025881">
    <property type="entry name" value="Toxin_Ibs"/>
</dbReference>
<dbReference type="Pfam" id="PF13956">
    <property type="entry name" value="Ibs_toxin"/>
    <property type="match status" value="1"/>
</dbReference>
<keyword id="KW-1185">Reference proteome</keyword>
<keyword id="KW-1277">Toxin-antitoxin system</keyword>
<accession>C1P615</accession>
<evidence type="ECO:0000269" key="1">
    <source>
    </source>
</evidence>
<evidence type="ECO:0000305" key="2"/>
<proteinExistence type="evidence at transcript level"/>
<protein>
    <recommendedName>
        <fullName>Small toxic protein IbsC</fullName>
    </recommendedName>
</protein>
<comment type="function">
    <text evidence="1">Toxic component of a type I toxin-antitoxin (TA) system. Overexpression causes cessation of growth and rapid membrane depolarization. Overexpression induces stress-response, the psp phage shock and a number of membrane protein genes.</text>
</comment>
<comment type="induction">
    <text evidence="1">The sibC sRNA prevents the toxic effects of IbsC overproduction, either by destabilizing the transcript and/or preventing its translation. Expression of the proteinaceous toxin is controlled by antisense sRNA SibC.</text>
</comment>
<comment type="disruption phenotype">
    <text evidence="1">None seen. An isbC overproducing strain cannot be made in the absence of the sibC gene.</text>
</comment>
<comment type="miscellaneous">
    <text>Part of the SIBc repeat region (formerly known as QUAD1c), encoded on the opposite strand from the sibC (formerly known as rygC) RNA.</text>
</comment>
<comment type="similarity">
    <text evidence="2">Belongs to the Ibs toxic protein family.</text>
</comment>
<sequence>MMRLVIILIVLLLISFSAY</sequence>
<feature type="chain" id="PRO_0000386422" description="Small toxic protein IbsC">
    <location>
        <begin position="1"/>
        <end position="19"/>
    </location>
</feature>
<organism>
    <name type="scientific">Escherichia coli (strain K12)</name>
    <dbReference type="NCBI Taxonomy" id="83333"/>
    <lineage>
        <taxon>Bacteria</taxon>
        <taxon>Pseudomonadati</taxon>
        <taxon>Pseudomonadota</taxon>
        <taxon>Gammaproteobacteria</taxon>
        <taxon>Enterobacterales</taxon>
        <taxon>Enterobacteriaceae</taxon>
        <taxon>Escherichia</taxon>
    </lineage>
</organism>
<name>IBSC_ECOLI</name>
<gene>
    <name type="primary">ibsC</name>
    <name type="ordered locus">b4665</name>
    <name type="ordered locus">JW2879.1</name>
</gene>